<sequence length="478" mass="53052">MAGVEEASSFGGHLNRDLDPDDREEGTSSTAEEAAKKKRRKKKKGKGAVSAGQQELDKESGTSVDEVAKQLERQALEEKEKDDDDEDGDGDGDGAAGKKKKKKKKKRGPRVQTDPPSVPICDLYPNGVFPKGQECEYPPTQDGRTAAWRTTSEEKKALDQASEEIWNDFREAAEAHRQVRKYVMSWIKPGMTMIEICEKLEDCSRKLIKENGLNAGLAFPTGCSLNNCAAHYTPNAGDTTVLQYDDICKIDFGTHISGRIIDCAFTVTFNPKYDILLKAVKDATNTGIKCAGIDVRLCDVGEAIQEVMESYEVEIDGKTYQVKPIRNLNGHSIGPYRIHAGKTVPIVKGGEATRMEEGEVYAIETFGSTGKGVVHDDMECSHYMKNFDVGHVPIRLPRTKHLLNVINENFGTLAFCRRWLDRLGESKYLMALKNLCDLGIVDPYPPLCDIKGSYTAQFEHTILLRPTCKEVVSRGDDY</sequence>
<feature type="initiator methionine" description="Removed" evidence="1">
    <location>
        <position position="1"/>
    </location>
</feature>
<feature type="chain" id="PRO_0000148984" description="Methionine aminopeptidase 2">
    <location>
        <begin position="2"/>
        <end position="478"/>
    </location>
</feature>
<feature type="region of interest" description="Disordered" evidence="3">
    <location>
        <begin position="1"/>
        <end position="123"/>
    </location>
</feature>
<feature type="compositionally biased region" description="Basic residues" evidence="3">
    <location>
        <begin position="36"/>
        <end position="46"/>
    </location>
</feature>
<feature type="compositionally biased region" description="Basic and acidic residues" evidence="3">
    <location>
        <begin position="55"/>
        <end position="79"/>
    </location>
</feature>
<feature type="compositionally biased region" description="Acidic residues" evidence="3">
    <location>
        <begin position="80"/>
        <end position="92"/>
    </location>
</feature>
<feature type="compositionally biased region" description="Basic residues" evidence="3">
    <location>
        <begin position="97"/>
        <end position="109"/>
    </location>
</feature>
<feature type="binding site" evidence="2">
    <location>
        <position position="231"/>
    </location>
    <ligand>
        <name>substrate</name>
    </ligand>
</feature>
<feature type="binding site" evidence="2">
    <location>
        <position position="251"/>
    </location>
    <ligand>
        <name>a divalent metal cation</name>
        <dbReference type="ChEBI" id="CHEBI:60240"/>
        <label>1</label>
    </ligand>
</feature>
<feature type="binding site" evidence="2">
    <location>
        <position position="262"/>
    </location>
    <ligand>
        <name>a divalent metal cation</name>
        <dbReference type="ChEBI" id="CHEBI:60240"/>
        <label>1</label>
    </ligand>
</feature>
<feature type="binding site" evidence="2">
    <location>
        <position position="262"/>
    </location>
    <ligand>
        <name>a divalent metal cation</name>
        <dbReference type="ChEBI" id="CHEBI:60240"/>
        <label>2</label>
        <note>catalytic</note>
    </ligand>
</feature>
<feature type="binding site" evidence="2">
    <location>
        <position position="331"/>
    </location>
    <ligand>
        <name>a divalent metal cation</name>
        <dbReference type="ChEBI" id="CHEBI:60240"/>
        <label>2</label>
        <note>catalytic</note>
    </ligand>
</feature>
<feature type="binding site" evidence="2">
    <location>
        <position position="339"/>
    </location>
    <ligand>
        <name>substrate</name>
    </ligand>
</feature>
<feature type="binding site" evidence="2">
    <location>
        <position position="364"/>
    </location>
    <ligand>
        <name>a divalent metal cation</name>
        <dbReference type="ChEBI" id="CHEBI:60240"/>
        <label>2</label>
        <note>catalytic</note>
    </ligand>
</feature>
<feature type="binding site" evidence="2">
    <location>
        <position position="459"/>
    </location>
    <ligand>
        <name>a divalent metal cation</name>
        <dbReference type="ChEBI" id="CHEBI:60240"/>
        <label>1</label>
    </ligand>
</feature>
<feature type="binding site" evidence="2">
    <location>
        <position position="459"/>
    </location>
    <ligand>
        <name>a divalent metal cation</name>
        <dbReference type="ChEBI" id="CHEBI:60240"/>
        <label>2</label>
        <note>catalytic</note>
    </ligand>
</feature>
<feature type="modified residue" description="N-acetylalanine" evidence="1">
    <location>
        <position position="2"/>
    </location>
</feature>
<feature type="modified residue" description="Phosphoserine; alternate" evidence="1">
    <location>
        <position position="60"/>
    </location>
</feature>
<feature type="modified residue" description="Phosphoserine; alternate" evidence="1">
    <location>
        <position position="63"/>
    </location>
</feature>
<feature type="glycosylation site" description="O-linked (GlcNAc) serine; alternate" evidence="8">
    <location>
        <position position="60"/>
    </location>
</feature>
<feature type="glycosylation site" description="O-linked (GlcNAc) serine; alternate" evidence="8">
    <location>
        <position position="63"/>
    </location>
</feature>
<feature type="sequence conflict" description="In Ref. 1; AAA41111." evidence="7" ref="1">
    <original>LRPTCKEVVSRGDDY</original>
    <variation>CAQPVKKLSAEEMTIKT</variation>
    <location>
        <begin position="464"/>
        <end position="478"/>
    </location>
</feature>
<gene>
    <name type="primary">Metap2</name>
    <name type="synonym">Mnpep</name>
    <name type="synonym">P67eif2</name>
</gene>
<reference key="1">
    <citation type="journal article" date="1993" name="J. Biol. Chem.">
        <title>Cloning and characterization of complementary DNA encoding the eukaryotic initiation factor 2-associated 67-kDa protein (p67).</title>
        <authorList>
            <person name="Wu S."/>
            <person name="Gupta S."/>
            <person name="Chatterjee N."/>
            <person name="Hileman R.E."/>
            <person name="Kinzy T.G."/>
            <person name="Denslow N.D."/>
            <person name="Merrick W.C."/>
            <person name="Chakrabarti D."/>
            <person name="Osterman J.C."/>
            <person name="Gupta N.K."/>
        </authorList>
    </citation>
    <scope>NUCLEOTIDE SEQUENCE [MRNA]</scope>
    <source>
        <strain>Reuber H35</strain>
        <tissue>Liver</tissue>
    </source>
</reference>
<reference key="2">
    <citation type="journal article" date="1995" name="Proc. Natl. Acad. Sci. U.S.A.">
        <title>Eukaryotic methionyl aminopeptidases: two classes of cobalt-dependent enzymes.</title>
        <authorList>
            <person name="Arfin S.M."/>
            <person name="Kendall R.L."/>
            <person name="Hall L."/>
            <person name="Weaver L.H."/>
            <person name="Stewart A.E."/>
            <person name="Matthews B.W."/>
            <person name="Bradshaw R.A."/>
        </authorList>
    </citation>
    <scope>SEQUENCE REVISION TO C-TERMINUS</scope>
</reference>
<reference key="3">
    <citation type="journal article" date="1998" name="Biochem. Biophys. Res. Commun.">
        <title>Expression and activity of p67 are induced during heat shock.</title>
        <authorList>
            <person name="Chatterjee M."/>
            <person name="Chatterjee N."/>
            <person name="Datta R."/>
            <person name="Datta B."/>
            <person name="Gupta N.K."/>
        </authorList>
    </citation>
    <scope>INDUCTION BY HEAT SHOCK</scope>
</reference>
<reference key="4">
    <citation type="journal article" date="2003" name="Biochemistry">
        <title>A glycosylation site, 60SGTS63, of p67 is required for its ability to regulate the phosphorylation and activity of eukaryotic initiation factor 2alpha.</title>
        <authorList>
            <person name="Datta R."/>
            <person name="Choudhury P."/>
            <person name="Ghosh A."/>
            <person name="Datta B."/>
        </authorList>
    </citation>
    <scope>GLYCOSYLATION AT SER-60 AND SER-63</scope>
</reference>
<reference key="5">
    <citation type="journal article" date="2006" name="Exp. Cell Res.">
        <title>The N-terminal lysine residue-rich domain II and the 340-430 amino acid segment of eukaryotic initiation factor 2-associated glycoprotein p67 are the binding sites for the gamma-subunit of eIF2.</title>
        <authorList>
            <person name="Ghosh A."/>
            <person name="Datta R."/>
            <person name="Majumdar A."/>
            <person name="Bhattacharya M."/>
            <person name="Datta B."/>
        </authorList>
    </citation>
    <scope>INTERACTION WITH EIF2S3</scope>
</reference>
<reference key="6">
    <citation type="journal article" date="2012" name="Nat. Commun.">
        <title>Quantitative maps of protein phosphorylation sites across 14 different rat organs and tissues.</title>
        <authorList>
            <person name="Lundby A."/>
            <person name="Secher A."/>
            <person name="Lage K."/>
            <person name="Nordsborg N.B."/>
            <person name="Dmytriyev A."/>
            <person name="Lundby C."/>
            <person name="Olsen J.V."/>
        </authorList>
    </citation>
    <scope>IDENTIFICATION BY MASS SPECTROMETRY [LARGE SCALE ANALYSIS]</scope>
</reference>
<name>MAP2_RAT</name>
<keyword id="KW-0007">Acetylation</keyword>
<keyword id="KW-0031">Aminopeptidase</keyword>
<keyword id="KW-0963">Cytoplasm</keyword>
<keyword id="KW-0325">Glycoprotein</keyword>
<keyword id="KW-0378">Hydrolase</keyword>
<keyword id="KW-0479">Metal-binding</keyword>
<keyword id="KW-0597">Phosphoprotein</keyword>
<keyword id="KW-0645">Protease</keyword>
<keyword id="KW-1185">Reference proteome</keyword>
<evidence type="ECO:0000250" key="1">
    <source>
        <dbReference type="UniProtKB" id="P50579"/>
    </source>
</evidence>
<evidence type="ECO:0000255" key="2">
    <source>
        <dbReference type="HAMAP-Rule" id="MF_03175"/>
    </source>
</evidence>
<evidence type="ECO:0000256" key="3">
    <source>
        <dbReference type="SAM" id="MobiDB-lite"/>
    </source>
</evidence>
<evidence type="ECO:0000269" key="4">
    <source>
    </source>
</evidence>
<evidence type="ECO:0000269" key="5">
    <source>
    </source>
</evidence>
<evidence type="ECO:0000269" key="6">
    <source>
    </source>
</evidence>
<evidence type="ECO:0000305" key="7"/>
<evidence type="ECO:0000305" key="8">
    <source>
    </source>
</evidence>
<protein>
    <recommendedName>
        <fullName evidence="2">Methionine aminopeptidase 2</fullName>
        <shortName evidence="2">MAP 2</shortName>
        <shortName evidence="2">MetAP 2</shortName>
        <ecNumber evidence="2">3.4.11.18</ecNumber>
    </recommendedName>
    <alternativeName>
        <fullName evidence="2">Initiation factor 2-associated 67 kDa glycoprotein</fullName>
        <shortName evidence="2">p67</shortName>
        <shortName evidence="2">p67eIF2</shortName>
    </alternativeName>
    <alternativeName>
        <fullName evidence="2">Peptidase M</fullName>
    </alternativeName>
</protein>
<dbReference type="EC" id="3.4.11.18" evidence="2"/>
<dbReference type="EMBL" id="L10652">
    <property type="protein sequence ID" value="AAA41111.1"/>
    <property type="molecule type" value="mRNA"/>
</dbReference>
<dbReference type="PIR" id="A46702">
    <property type="entry name" value="A46702"/>
</dbReference>
<dbReference type="RefSeq" id="NP_071984.1">
    <property type="nucleotide sequence ID" value="NM_022539.1"/>
</dbReference>
<dbReference type="SMR" id="P38062"/>
<dbReference type="FunCoup" id="P38062">
    <property type="interactions" value="3386"/>
</dbReference>
<dbReference type="STRING" id="10116.ENSRNOP00000032680"/>
<dbReference type="MEROPS" id="M24.002"/>
<dbReference type="GlyCosmos" id="P38062">
    <property type="glycosylation" value="2 sites, No reported glycans"/>
</dbReference>
<dbReference type="GlyGen" id="P38062">
    <property type="glycosylation" value="2 sites, 1 O-linked glycan (2 sites)"/>
</dbReference>
<dbReference type="iPTMnet" id="P38062"/>
<dbReference type="PhosphoSitePlus" id="P38062"/>
<dbReference type="jPOST" id="P38062"/>
<dbReference type="PaxDb" id="10116-ENSRNOP00000032680"/>
<dbReference type="PeptideAtlas" id="P38062"/>
<dbReference type="GeneID" id="64370"/>
<dbReference type="KEGG" id="rno:64370"/>
<dbReference type="UCSC" id="RGD:70995">
    <property type="organism name" value="rat"/>
</dbReference>
<dbReference type="AGR" id="RGD:70995"/>
<dbReference type="CTD" id="10988"/>
<dbReference type="RGD" id="70995">
    <property type="gene designation" value="Metap2"/>
</dbReference>
<dbReference type="eggNOG" id="KOG2775">
    <property type="taxonomic scope" value="Eukaryota"/>
</dbReference>
<dbReference type="InParanoid" id="P38062"/>
<dbReference type="PhylomeDB" id="P38062"/>
<dbReference type="BRENDA" id="3.4.11.18">
    <property type="organism ID" value="5301"/>
</dbReference>
<dbReference type="Reactome" id="R-RNO-2514859">
    <property type="pathway name" value="Inactivation, recovery and regulation of the phototransduction cascade"/>
</dbReference>
<dbReference type="PRO" id="PR:P38062"/>
<dbReference type="Proteomes" id="UP000002494">
    <property type="component" value="Unplaced"/>
</dbReference>
<dbReference type="GO" id="GO:0005737">
    <property type="term" value="C:cytoplasm"/>
    <property type="evidence" value="ECO:0000250"/>
    <property type="project" value="HGNC-UCL"/>
</dbReference>
<dbReference type="GO" id="GO:0004177">
    <property type="term" value="F:aminopeptidase activity"/>
    <property type="evidence" value="ECO:0000250"/>
    <property type="project" value="UniProtKB"/>
</dbReference>
<dbReference type="GO" id="GO:0004239">
    <property type="term" value="F:initiator methionyl aminopeptidase activity"/>
    <property type="evidence" value="ECO:0007669"/>
    <property type="project" value="UniProtKB-UniRule"/>
</dbReference>
<dbReference type="GO" id="GO:0046872">
    <property type="term" value="F:metal ion binding"/>
    <property type="evidence" value="ECO:0007669"/>
    <property type="project" value="UniProtKB-UniRule"/>
</dbReference>
<dbReference type="GO" id="GO:0070006">
    <property type="term" value="F:metalloaminopeptidase activity"/>
    <property type="evidence" value="ECO:0007669"/>
    <property type="project" value="UniProtKB-UniRule"/>
</dbReference>
<dbReference type="GO" id="GO:0008235">
    <property type="term" value="F:metalloexopeptidase activity"/>
    <property type="evidence" value="ECO:0000250"/>
    <property type="project" value="HGNC"/>
</dbReference>
<dbReference type="GO" id="GO:0016485">
    <property type="term" value="P:protein processing"/>
    <property type="evidence" value="ECO:0000250"/>
    <property type="project" value="HGNC-UCL"/>
</dbReference>
<dbReference type="GO" id="GO:0006446">
    <property type="term" value="P:regulation of translational initiation"/>
    <property type="evidence" value="ECO:0000250"/>
    <property type="project" value="HGNC-UCL"/>
</dbReference>
<dbReference type="CDD" id="cd01088">
    <property type="entry name" value="MetAP2"/>
    <property type="match status" value="1"/>
</dbReference>
<dbReference type="FunFam" id="1.10.10.10:FF:000106">
    <property type="entry name" value="Methionine aminopeptidase 2"/>
    <property type="match status" value="1"/>
</dbReference>
<dbReference type="FunFam" id="3.90.230.10:FF:000003">
    <property type="entry name" value="Methionine aminopeptidase 2"/>
    <property type="match status" value="1"/>
</dbReference>
<dbReference type="Gene3D" id="3.90.230.10">
    <property type="entry name" value="Creatinase/methionine aminopeptidase superfamily"/>
    <property type="match status" value="1"/>
</dbReference>
<dbReference type="Gene3D" id="1.10.10.10">
    <property type="entry name" value="Winged helix-like DNA-binding domain superfamily/Winged helix DNA-binding domain"/>
    <property type="match status" value="1"/>
</dbReference>
<dbReference type="HAMAP" id="MF_03175">
    <property type="entry name" value="MetAP_2_euk"/>
    <property type="match status" value="1"/>
</dbReference>
<dbReference type="InterPro" id="IPR036005">
    <property type="entry name" value="Creatinase/aminopeptidase-like"/>
</dbReference>
<dbReference type="InterPro" id="IPR050247">
    <property type="entry name" value="Met_Aminopeptidase_Type2"/>
</dbReference>
<dbReference type="InterPro" id="IPR000994">
    <property type="entry name" value="Pept_M24"/>
</dbReference>
<dbReference type="InterPro" id="IPR001714">
    <property type="entry name" value="Pept_M24_MAP"/>
</dbReference>
<dbReference type="InterPro" id="IPR002468">
    <property type="entry name" value="Pept_M24A_MAP2"/>
</dbReference>
<dbReference type="InterPro" id="IPR018349">
    <property type="entry name" value="Pept_M24A_MAP2_BS"/>
</dbReference>
<dbReference type="InterPro" id="IPR036388">
    <property type="entry name" value="WH-like_DNA-bd_sf"/>
</dbReference>
<dbReference type="InterPro" id="IPR036390">
    <property type="entry name" value="WH_DNA-bd_sf"/>
</dbReference>
<dbReference type="NCBIfam" id="TIGR00501">
    <property type="entry name" value="met_pdase_II"/>
    <property type="match status" value="1"/>
</dbReference>
<dbReference type="PANTHER" id="PTHR45777">
    <property type="entry name" value="METHIONINE AMINOPEPTIDASE 2"/>
    <property type="match status" value="1"/>
</dbReference>
<dbReference type="PANTHER" id="PTHR45777:SF2">
    <property type="entry name" value="METHIONINE AMINOPEPTIDASE 2"/>
    <property type="match status" value="1"/>
</dbReference>
<dbReference type="Pfam" id="PF00557">
    <property type="entry name" value="Peptidase_M24"/>
    <property type="match status" value="1"/>
</dbReference>
<dbReference type="PRINTS" id="PR00599">
    <property type="entry name" value="MAPEPTIDASE"/>
</dbReference>
<dbReference type="SUPFAM" id="SSF55920">
    <property type="entry name" value="Creatinase/aminopeptidase"/>
    <property type="match status" value="1"/>
</dbReference>
<dbReference type="SUPFAM" id="SSF46785">
    <property type="entry name" value="Winged helix' DNA-binding domain"/>
    <property type="match status" value="1"/>
</dbReference>
<dbReference type="PROSITE" id="PS01202">
    <property type="entry name" value="MAP_2"/>
    <property type="match status" value="1"/>
</dbReference>
<proteinExistence type="evidence at protein level"/>
<organism>
    <name type="scientific">Rattus norvegicus</name>
    <name type="common">Rat</name>
    <dbReference type="NCBI Taxonomy" id="10116"/>
    <lineage>
        <taxon>Eukaryota</taxon>
        <taxon>Metazoa</taxon>
        <taxon>Chordata</taxon>
        <taxon>Craniata</taxon>
        <taxon>Vertebrata</taxon>
        <taxon>Euteleostomi</taxon>
        <taxon>Mammalia</taxon>
        <taxon>Eutheria</taxon>
        <taxon>Euarchontoglires</taxon>
        <taxon>Glires</taxon>
        <taxon>Rodentia</taxon>
        <taxon>Myomorpha</taxon>
        <taxon>Muroidea</taxon>
        <taxon>Muridae</taxon>
        <taxon>Murinae</taxon>
        <taxon>Rattus</taxon>
    </lineage>
</organism>
<comment type="function">
    <text>Cotranslationally removes the N-terminal methionine from nascent proteins. The N-terminal methionine is often cleaved when the second residue in the primary sequence is small and uncharged (Met-Ala-, Cys, Gly, Pro, Ser, Thr, or Val).</text>
</comment>
<comment type="function">
    <text>Protects eukaryotic initiation factor EIF2S1 from translation-inhibiting phosphorylation by inhibitory kinases such as EIF2AK2/PKR and EIF2AK1/HCR. Plays a critical role in the regulation of protein synthesis.</text>
</comment>
<comment type="catalytic activity">
    <reaction evidence="2">
        <text>Release of N-terminal amino acids, preferentially methionine, from peptides and arylamides.</text>
        <dbReference type="EC" id="3.4.11.18"/>
    </reaction>
</comment>
<comment type="cofactor">
    <cofactor evidence="2">
        <name>Co(2+)</name>
        <dbReference type="ChEBI" id="CHEBI:48828"/>
    </cofactor>
    <cofactor evidence="2">
        <name>Zn(2+)</name>
        <dbReference type="ChEBI" id="CHEBI:29105"/>
    </cofactor>
    <cofactor evidence="2">
        <name>Mn(2+)</name>
        <dbReference type="ChEBI" id="CHEBI:29035"/>
    </cofactor>
    <cofactor evidence="2">
        <name>Fe(2+)</name>
        <dbReference type="ChEBI" id="CHEBI:29033"/>
    </cofactor>
    <text evidence="2">Binds 2 divalent metal cations per subunit. Has a high-affinity and a low affinity metal-binding site. The true nature of the physiological cofactor is under debate. The enzyme is active with cobalt, zinc, manganese or divalent iron ions. Most likely, methionine aminopeptidases function as mononuclear Fe(2+)-metalloproteases under physiological conditions, and the catalytically relevant metal-binding site has been assigned to the histidine-containing high-affinity site.</text>
</comment>
<comment type="subunit">
    <text evidence="2 5">Binds EIF2S1 at low magnesium concentrations (By similarity). Interacts strongly with the eIF-2 gamma-subunit EIF2S3.</text>
</comment>
<comment type="subcellular location">
    <subcellularLocation>
        <location>Cytoplasm</location>
    </subcellularLocation>
    <text evidence="2">About 30% of expressed METAP2 associates with polysomes.</text>
</comment>
<comment type="induction">
    <text evidence="6">Heat shock increases expression by more than 36-fold.</text>
</comment>
<comment type="PTM">
    <text evidence="4">O-glycosylated; contains 12 O-linked GlcNAc.</text>
</comment>
<comment type="PTM">
    <text evidence="2">Contains approximately 12 O-linked N-acetylglucosamine (GlcNAc) residues. O-glycosylation is required for EIF2S1 binding.</text>
</comment>
<comment type="similarity">
    <text evidence="2">Belongs to the peptidase M24A family. Methionine aminopeptidase eukaryotic type 2 subfamily.</text>
</comment>
<accession>P38062</accession>